<proteinExistence type="evidence at protein level"/>
<gene>
    <name type="primary">argR</name>
    <name type="ordered locus">STM3360</name>
</gene>
<organism>
    <name type="scientific">Salmonella typhimurium (strain LT2 / SGSC1412 / ATCC 700720)</name>
    <dbReference type="NCBI Taxonomy" id="99287"/>
    <lineage>
        <taxon>Bacteria</taxon>
        <taxon>Pseudomonadati</taxon>
        <taxon>Pseudomonadota</taxon>
        <taxon>Gammaproteobacteria</taxon>
        <taxon>Enterobacterales</taxon>
        <taxon>Enterobacteriaceae</taxon>
        <taxon>Salmonella</taxon>
    </lineage>
</organism>
<name>ARGR_SALTY</name>
<reference key="1">
    <citation type="journal article" date="1992" name="J. Mol. Biol.">
        <title>Characterization of the arginine repressor from Salmonella typhimurium and its interactions with the carAB operator.</title>
        <authorList>
            <person name="Lu C.-D."/>
            <person name="Houghton J.E."/>
            <person name="Abdelal A.T."/>
        </authorList>
    </citation>
    <scope>NUCLEOTIDE SEQUENCE [GENOMIC DNA]</scope>
    <scope>PROTEIN SEQUENCE OF 1-25</scope>
    <scope>FUNCTION</scope>
    <scope>PATHWAY</scope>
    <scope>SUBUNIT</scope>
    <scope>SUBCELLULAR LOCATION</scope>
    <source>
        <strain>LT2</strain>
    </source>
</reference>
<reference key="2">
    <citation type="journal article" date="2001" name="Nature">
        <title>Complete genome sequence of Salmonella enterica serovar Typhimurium LT2.</title>
        <authorList>
            <person name="McClelland M."/>
            <person name="Sanderson K.E."/>
            <person name="Spieth J."/>
            <person name="Clifton S.W."/>
            <person name="Latreille P."/>
            <person name="Courtney L."/>
            <person name="Porwollik S."/>
            <person name="Ali J."/>
            <person name="Dante M."/>
            <person name="Du F."/>
            <person name="Hou S."/>
            <person name="Layman D."/>
            <person name="Leonard S."/>
            <person name="Nguyen C."/>
            <person name="Scott K."/>
            <person name="Holmes A."/>
            <person name="Grewal N."/>
            <person name="Mulvaney E."/>
            <person name="Ryan E."/>
            <person name="Sun H."/>
            <person name="Florea L."/>
            <person name="Miller W."/>
            <person name="Stoneking T."/>
            <person name="Nhan M."/>
            <person name="Waterston R."/>
            <person name="Wilson R.K."/>
        </authorList>
    </citation>
    <scope>NUCLEOTIDE SEQUENCE [LARGE SCALE GENOMIC DNA]</scope>
    <source>
        <strain>LT2 / SGSC1412 / ATCC 700720</strain>
    </source>
</reference>
<feature type="chain" id="PRO_0000205111" description="Arginine repressor">
    <location>
        <begin position="1"/>
        <end position="156"/>
    </location>
</feature>
<evidence type="ECO:0000269" key="1">
    <source>
    </source>
</evidence>
<evidence type="ECO:0000305" key="2"/>
<evidence type="ECO:0000305" key="3">
    <source>
    </source>
</evidence>
<accession>P0A1B3</accession>
<accession>P37170</accession>
<keyword id="KW-0028">Amino-acid biosynthesis</keyword>
<keyword id="KW-0055">Arginine biosynthesis</keyword>
<keyword id="KW-0963">Cytoplasm</keyword>
<keyword id="KW-0903">Direct protein sequencing</keyword>
<keyword id="KW-0238">DNA-binding</keyword>
<keyword id="KW-1185">Reference proteome</keyword>
<keyword id="KW-0678">Repressor</keyword>
<keyword id="KW-0804">Transcription</keyword>
<keyword id="KW-0805">Transcription regulation</keyword>
<dbReference type="EMBL" id="M75913">
    <property type="protein sequence ID" value="AAA27027.1"/>
    <property type="molecule type" value="Genomic_DNA"/>
</dbReference>
<dbReference type="EMBL" id="AE006468">
    <property type="protein sequence ID" value="AAL22229.1"/>
    <property type="molecule type" value="Genomic_DNA"/>
</dbReference>
<dbReference type="PIR" id="S21802">
    <property type="entry name" value="S21802"/>
</dbReference>
<dbReference type="RefSeq" id="NP_462270.1">
    <property type="nucleotide sequence ID" value="NC_003197.2"/>
</dbReference>
<dbReference type="RefSeq" id="WP_001257852.1">
    <property type="nucleotide sequence ID" value="NC_003197.2"/>
</dbReference>
<dbReference type="SMR" id="P0A1B3"/>
<dbReference type="STRING" id="99287.STM3360"/>
<dbReference type="PaxDb" id="99287-STM3360"/>
<dbReference type="GeneID" id="1254883"/>
<dbReference type="KEGG" id="stm:STM3360"/>
<dbReference type="PATRIC" id="fig|99287.12.peg.3561"/>
<dbReference type="HOGENOM" id="CLU_097103_2_0_6"/>
<dbReference type="OMA" id="MHAVKTR"/>
<dbReference type="PhylomeDB" id="P0A1B3"/>
<dbReference type="BioCyc" id="SENT99287:STM3360-MONOMER"/>
<dbReference type="UniPathway" id="UPA00068"/>
<dbReference type="Proteomes" id="UP000001014">
    <property type="component" value="Chromosome"/>
</dbReference>
<dbReference type="GO" id="GO:0005737">
    <property type="term" value="C:cytoplasm"/>
    <property type="evidence" value="ECO:0007669"/>
    <property type="project" value="UniProtKB-SubCell"/>
</dbReference>
<dbReference type="GO" id="GO:0005667">
    <property type="term" value="C:transcription regulator complex"/>
    <property type="evidence" value="ECO:0000318"/>
    <property type="project" value="GO_Central"/>
</dbReference>
<dbReference type="GO" id="GO:0034618">
    <property type="term" value="F:arginine binding"/>
    <property type="evidence" value="ECO:0007669"/>
    <property type="project" value="InterPro"/>
</dbReference>
<dbReference type="GO" id="GO:0000987">
    <property type="term" value="F:cis-regulatory region sequence-specific DNA binding"/>
    <property type="evidence" value="ECO:0000318"/>
    <property type="project" value="GO_Central"/>
</dbReference>
<dbReference type="GO" id="GO:0003700">
    <property type="term" value="F:DNA-binding transcription factor activity"/>
    <property type="evidence" value="ECO:0007669"/>
    <property type="project" value="UniProtKB-UniRule"/>
</dbReference>
<dbReference type="GO" id="GO:0006526">
    <property type="term" value="P:L-arginine biosynthetic process"/>
    <property type="evidence" value="ECO:0007669"/>
    <property type="project" value="UniProtKB-UniPathway"/>
</dbReference>
<dbReference type="GO" id="GO:0051259">
    <property type="term" value="P:protein complex oligomerization"/>
    <property type="evidence" value="ECO:0007669"/>
    <property type="project" value="InterPro"/>
</dbReference>
<dbReference type="GO" id="GO:1900079">
    <property type="term" value="P:regulation of arginine biosynthetic process"/>
    <property type="evidence" value="ECO:0007669"/>
    <property type="project" value="UniProtKB-UniRule"/>
</dbReference>
<dbReference type="GO" id="GO:0000821">
    <property type="term" value="P:regulation of arginine metabolic process"/>
    <property type="evidence" value="ECO:0000318"/>
    <property type="project" value="GO_Central"/>
</dbReference>
<dbReference type="FunFam" id="1.10.10.10:FF:000074">
    <property type="entry name" value="Arginine repressor"/>
    <property type="match status" value="1"/>
</dbReference>
<dbReference type="FunFam" id="3.30.1360.40:FF:000004">
    <property type="entry name" value="Arginine repressor"/>
    <property type="match status" value="1"/>
</dbReference>
<dbReference type="Gene3D" id="3.30.1360.40">
    <property type="match status" value="1"/>
</dbReference>
<dbReference type="Gene3D" id="1.10.10.10">
    <property type="entry name" value="Winged helix-like DNA-binding domain superfamily/Winged helix DNA-binding domain"/>
    <property type="match status" value="1"/>
</dbReference>
<dbReference type="HAMAP" id="MF_00173">
    <property type="entry name" value="Arg_repressor"/>
    <property type="match status" value="1"/>
</dbReference>
<dbReference type="InterPro" id="IPR001669">
    <property type="entry name" value="Arg_repress"/>
</dbReference>
<dbReference type="InterPro" id="IPR020899">
    <property type="entry name" value="Arg_repress_C"/>
</dbReference>
<dbReference type="InterPro" id="IPR036251">
    <property type="entry name" value="Arg_repress_C_sf"/>
</dbReference>
<dbReference type="InterPro" id="IPR020900">
    <property type="entry name" value="Arg_repress_DNA-bd"/>
</dbReference>
<dbReference type="InterPro" id="IPR036388">
    <property type="entry name" value="WH-like_DNA-bd_sf"/>
</dbReference>
<dbReference type="InterPro" id="IPR036390">
    <property type="entry name" value="WH_DNA-bd_sf"/>
</dbReference>
<dbReference type="NCBIfam" id="TIGR01529">
    <property type="entry name" value="argR_whole"/>
    <property type="match status" value="1"/>
</dbReference>
<dbReference type="NCBIfam" id="NF003457">
    <property type="entry name" value="PRK05066.1"/>
    <property type="match status" value="1"/>
</dbReference>
<dbReference type="PANTHER" id="PTHR34471">
    <property type="entry name" value="ARGININE REPRESSOR"/>
    <property type="match status" value="1"/>
</dbReference>
<dbReference type="PANTHER" id="PTHR34471:SF1">
    <property type="entry name" value="ARGININE REPRESSOR"/>
    <property type="match status" value="1"/>
</dbReference>
<dbReference type="Pfam" id="PF01316">
    <property type="entry name" value="Arg_repressor"/>
    <property type="match status" value="1"/>
</dbReference>
<dbReference type="Pfam" id="PF02863">
    <property type="entry name" value="Arg_repressor_C"/>
    <property type="match status" value="1"/>
</dbReference>
<dbReference type="PRINTS" id="PR01467">
    <property type="entry name" value="ARGREPRESSOR"/>
</dbReference>
<dbReference type="SUPFAM" id="SSF55252">
    <property type="entry name" value="C-terminal domain of arginine repressor"/>
    <property type="match status" value="1"/>
</dbReference>
<dbReference type="SUPFAM" id="SSF46785">
    <property type="entry name" value="Winged helix' DNA-binding domain"/>
    <property type="match status" value="1"/>
</dbReference>
<protein>
    <recommendedName>
        <fullName>Arginine repressor</fullName>
    </recommendedName>
</protein>
<sequence>MRSSAKQEELVRAFKALLKEEKFSSQGEIVLALQDQGFENINQSKVSRMLTKFGAVRTRNAKMEMVYCLPAELGVPTTSSPLKNLVLDIDYNDAVVVIHTSPGAAQLIARLLDSLGKAEGILGTIAGDDTIFTTPASGFSVRDLYEAILELFEQEL</sequence>
<comment type="function">
    <text evidence="1">Negatively controls the expression of the four operons of arginine biosynthesis in addition to the carAB operon. Predominantly interacts with A/T residues in ARG boxes.</text>
</comment>
<comment type="pathway">
    <text evidence="1">Amino-acid biosynthesis; L-arginine biosynthesis [regulation].</text>
</comment>
<comment type="subunit">
    <text evidence="1">Homohexamer.</text>
</comment>
<comment type="subcellular location">
    <subcellularLocation>
        <location evidence="3">Cytoplasm</location>
    </subcellularLocation>
</comment>
<comment type="similarity">
    <text evidence="2">Belongs to the ArgR family.</text>
</comment>